<evidence type="ECO:0000250" key="1">
    <source>
        <dbReference type="UniProtKB" id="O35988"/>
    </source>
</evidence>
<evidence type="ECO:0000250" key="2">
    <source>
        <dbReference type="UniProtKB" id="P31431"/>
    </source>
</evidence>
<evidence type="ECO:0000250" key="3">
    <source>
        <dbReference type="UniProtKB" id="P34901"/>
    </source>
</evidence>
<evidence type="ECO:0000255" key="4"/>
<evidence type="ECO:0000256" key="5">
    <source>
        <dbReference type="SAM" id="MobiDB-lite"/>
    </source>
</evidence>
<evidence type="ECO:0000305" key="6"/>
<name>SDC4_PIG</name>
<dbReference type="EMBL" id="AF548542">
    <property type="protein sequence ID" value="AAN59952.1"/>
    <property type="molecule type" value="mRNA"/>
</dbReference>
<dbReference type="RefSeq" id="NP_999449.1">
    <property type="nucleotide sequence ID" value="NM_214284.1"/>
</dbReference>
<dbReference type="SMR" id="Q8HZJ6"/>
<dbReference type="FunCoup" id="Q8HZJ6">
    <property type="interactions" value="174"/>
</dbReference>
<dbReference type="STRING" id="9823.ENSSSCP00000048536"/>
<dbReference type="GlyCosmos" id="Q8HZJ6">
    <property type="glycosylation" value="3 sites, No reported glycans"/>
</dbReference>
<dbReference type="GlyGen" id="Q8HZJ6">
    <property type="glycosylation" value="3 sites"/>
</dbReference>
<dbReference type="PaxDb" id="9823-ENSSSCP00000007885"/>
<dbReference type="Ensembl" id="ENSSSCT00040023680.1">
    <property type="protein sequence ID" value="ENSSSCP00040010013.1"/>
    <property type="gene ID" value="ENSSSCG00040017528.1"/>
</dbReference>
<dbReference type="Ensembl" id="ENSSSCT00070024682.1">
    <property type="protein sequence ID" value="ENSSSCP00070020431.1"/>
    <property type="gene ID" value="ENSSSCG00070012642.1"/>
</dbReference>
<dbReference type="Ensembl" id="ENSSSCT00085051093">
    <property type="protein sequence ID" value="ENSSSCP00085035825"/>
    <property type="gene ID" value="ENSSSCG00085026590"/>
</dbReference>
<dbReference type="Ensembl" id="ENSSSCT00090003639">
    <property type="protein sequence ID" value="ENSSSCP00090002301"/>
    <property type="gene ID" value="ENSSSCG00090002161"/>
</dbReference>
<dbReference type="Ensembl" id="ENSSSCT00110038442">
    <property type="protein sequence ID" value="ENSSSCP00110026522"/>
    <property type="gene ID" value="ENSSSCG00110020008"/>
</dbReference>
<dbReference type="Ensembl" id="ENSSSCT00115018164">
    <property type="protein sequence ID" value="ENSSSCP00115017155"/>
    <property type="gene ID" value="ENSSSCG00115010547"/>
</dbReference>
<dbReference type="Ensembl" id="ENSSSCT00130000944">
    <property type="protein sequence ID" value="ENSSSCP00130000656"/>
    <property type="gene ID" value="ENSSSCG00130000534"/>
</dbReference>
<dbReference type="GeneID" id="397528"/>
<dbReference type="KEGG" id="ssc:397528"/>
<dbReference type="CTD" id="6385"/>
<dbReference type="eggNOG" id="ENOG502S1SZ">
    <property type="taxonomic scope" value="Eukaryota"/>
</dbReference>
<dbReference type="HOGENOM" id="CLU_046599_3_0_1"/>
<dbReference type="InParanoid" id="Q8HZJ6"/>
<dbReference type="OMA" id="WVPTEPK"/>
<dbReference type="OrthoDB" id="10044468at2759"/>
<dbReference type="Reactome" id="R-SSC-1971475">
    <property type="pathway name" value="A tetrasaccharide linker sequence is required for GAG synthesis"/>
</dbReference>
<dbReference type="Reactome" id="R-SSC-2022928">
    <property type="pathway name" value="HS-GAG biosynthesis"/>
</dbReference>
<dbReference type="Reactome" id="R-SSC-2024096">
    <property type="pathway name" value="HS-GAG degradation"/>
</dbReference>
<dbReference type="Reactome" id="R-SSC-202733">
    <property type="pathway name" value="Cell surface interactions at the vascular wall"/>
</dbReference>
<dbReference type="Reactome" id="R-SSC-3000170">
    <property type="pathway name" value="Syndecan interactions"/>
</dbReference>
<dbReference type="Reactome" id="R-SSC-975634">
    <property type="pathway name" value="Retinoid metabolism and transport"/>
</dbReference>
<dbReference type="Proteomes" id="UP000008227">
    <property type="component" value="Unplaced"/>
</dbReference>
<dbReference type="Proteomes" id="UP000314985">
    <property type="component" value="Chromosome 17"/>
</dbReference>
<dbReference type="Proteomes" id="UP000694570">
    <property type="component" value="Unplaced"/>
</dbReference>
<dbReference type="Proteomes" id="UP000694571">
    <property type="component" value="Unplaced"/>
</dbReference>
<dbReference type="Proteomes" id="UP000694720">
    <property type="component" value="Unplaced"/>
</dbReference>
<dbReference type="Proteomes" id="UP000694722">
    <property type="component" value="Unplaced"/>
</dbReference>
<dbReference type="Proteomes" id="UP000694723">
    <property type="component" value="Unplaced"/>
</dbReference>
<dbReference type="Proteomes" id="UP000694724">
    <property type="component" value="Unplaced"/>
</dbReference>
<dbReference type="Proteomes" id="UP000694725">
    <property type="component" value="Unplaced"/>
</dbReference>
<dbReference type="Proteomes" id="UP000694726">
    <property type="component" value="Unplaced"/>
</dbReference>
<dbReference type="Proteomes" id="UP000694727">
    <property type="component" value="Unplaced"/>
</dbReference>
<dbReference type="Proteomes" id="UP000694728">
    <property type="component" value="Unplaced"/>
</dbReference>
<dbReference type="GO" id="GO:0009986">
    <property type="term" value="C:cell surface"/>
    <property type="evidence" value="ECO:0000318"/>
    <property type="project" value="GO_Central"/>
</dbReference>
<dbReference type="GO" id="GO:0005576">
    <property type="term" value="C:extracellular region"/>
    <property type="evidence" value="ECO:0007669"/>
    <property type="project" value="UniProtKB-SubCell"/>
</dbReference>
<dbReference type="GO" id="GO:0016020">
    <property type="term" value="C:membrane"/>
    <property type="evidence" value="ECO:0007669"/>
    <property type="project" value="UniProtKB-SubCell"/>
</dbReference>
<dbReference type="GO" id="GO:0016477">
    <property type="term" value="P:cell migration"/>
    <property type="evidence" value="ECO:0000318"/>
    <property type="project" value="GO_Central"/>
</dbReference>
<dbReference type="InterPro" id="IPR003585">
    <property type="entry name" value="Neurexin-like"/>
</dbReference>
<dbReference type="InterPro" id="IPR001050">
    <property type="entry name" value="Syndecan"/>
</dbReference>
<dbReference type="InterPro" id="IPR027789">
    <property type="entry name" value="Syndecan/Neurexin_dom"/>
</dbReference>
<dbReference type="InterPro" id="IPR030479">
    <property type="entry name" value="Syndecan_CS"/>
</dbReference>
<dbReference type="PANTHER" id="PTHR10915">
    <property type="entry name" value="SYNDECAN"/>
    <property type="match status" value="1"/>
</dbReference>
<dbReference type="PANTHER" id="PTHR10915:SF3">
    <property type="entry name" value="SYNDECAN-4"/>
    <property type="match status" value="1"/>
</dbReference>
<dbReference type="Pfam" id="PF01034">
    <property type="entry name" value="Syndecan"/>
    <property type="match status" value="1"/>
</dbReference>
<dbReference type="SMART" id="SM00294">
    <property type="entry name" value="4.1m"/>
    <property type="match status" value="1"/>
</dbReference>
<dbReference type="PROSITE" id="PS00964">
    <property type="entry name" value="SYNDECAN"/>
    <property type="match status" value="1"/>
</dbReference>
<comment type="function">
    <text evidence="2">Cell surface proteoglycan which regulates exosome biogenesis in concert with SDCBP and PDCD6IP.</text>
</comment>
<comment type="subunit">
    <text evidence="1 2">Homodimer. Interacts with CDCP1 and SDCBP (By similarity). Interacts (via its cytoplasmic domain) with GIPC (via its PDZ domain). Interacts (via its cytoplasmic domain) with NUDT16L1 (By similarity). Interacts with DNM2; this interaction is markedly enhanced at focal ahesion site upon induction of focal adhesions and stress-fiber formation (By similarity).</text>
</comment>
<comment type="subcellular location">
    <subcellularLocation>
        <location evidence="4">Membrane</location>
        <topology evidence="4">Single-pass type I membrane protein</topology>
    </subcellularLocation>
    <subcellularLocation>
        <location evidence="2">Secreted</location>
    </subcellularLocation>
    <text evidence="2">Shedding of the ectodomain produces a soluble form.</text>
</comment>
<comment type="PTM">
    <text evidence="2">Shedding, cleavage of the extracellular domain to release a soluble form, is enhanced by a number of factors such as heparanase, growth factor receptor action for example by thrombin or EGF. Physiological events such as stress or wound healing can activate the shedding. PMA-mediated shedding is inhibited by TIMP3 (By similarity).</text>
</comment>
<comment type="PTM">
    <text evidence="3">O-glycosylated; contains both chondroitin sulfate and heparan sulfate. Ser-43, Ser-65 and Ser-67 can all be modified by either chondroitin sulfate or heparan sulfate, and the protein exists in forms that contain only chondroitin sulfate, only heparan sulfate and both chondroitin sulfate and heparan sulfate.</text>
</comment>
<comment type="similarity">
    <text evidence="6">Belongs to the syndecan proteoglycan family.</text>
</comment>
<accession>Q8HZJ6</accession>
<proteinExistence type="evidence at transcript level"/>
<gene>
    <name evidence="2" type="primary">SDC4</name>
</gene>
<keyword id="KW-0325">Glycoprotein</keyword>
<keyword id="KW-0357">Heparan sulfate</keyword>
<keyword id="KW-0472">Membrane</keyword>
<keyword id="KW-0654">Proteoglycan</keyword>
<keyword id="KW-1185">Reference proteome</keyword>
<keyword id="KW-0964">Secreted</keyword>
<keyword id="KW-0732">Signal</keyword>
<keyword id="KW-0812">Transmembrane</keyword>
<keyword id="KW-1133">Transmembrane helix</keyword>
<sequence length="202" mass="22081">MASPRLLALLLLLVGAFNAAAAESIRETEVINPQDLLEGRYFSGDLPDDEDVGGPGQEPDDFEWSGSGDLEGPEDKHMLPEVTHPLVPLDNHIPERTGPGGRVPTEPKELEENEVIPKRMSPFDGDEDVSNKVSMSSTAQGSNIFERTEVLSALIVGGIVGILFAVFLVLLLVYRMKKKDEGSYDLGKKPIYKKAPTNEFYA</sequence>
<reference key="1">
    <citation type="submission" date="2002-09" db="EMBL/GenBank/DDBJ databases">
        <title>Differences between heparan sulphate proteoglycans of porcine brain capillary and aortic endothelial cells.</title>
        <authorList>
            <person name="Ruehland C."/>
            <person name="Kresse H."/>
        </authorList>
    </citation>
    <scope>NUCLEOTIDE SEQUENCE [MRNA]</scope>
    <source>
        <tissue>Aortic endothelium</tissue>
    </source>
</reference>
<feature type="signal peptide" evidence="4">
    <location>
        <begin position="1"/>
        <end position="22"/>
    </location>
</feature>
<feature type="chain" id="PRO_0000290108" description="Syndecan-4">
    <location>
        <begin position="23"/>
        <end position="202"/>
    </location>
</feature>
<feature type="topological domain" description="Extracellular" evidence="4">
    <location>
        <begin position="23"/>
        <end position="152"/>
    </location>
</feature>
<feature type="transmembrane region" description="Helical" evidence="4">
    <location>
        <begin position="153"/>
        <end position="173"/>
    </location>
</feature>
<feature type="topological domain" description="Cytoplasmic" evidence="4">
    <location>
        <begin position="174"/>
        <end position="202"/>
    </location>
</feature>
<feature type="region of interest" description="Disordered" evidence="5">
    <location>
        <begin position="41"/>
        <end position="75"/>
    </location>
</feature>
<feature type="region of interest" description="Disordered" evidence="5">
    <location>
        <begin position="87"/>
        <end position="112"/>
    </location>
</feature>
<feature type="compositionally biased region" description="Acidic residues" evidence="5">
    <location>
        <begin position="46"/>
        <end position="63"/>
    </location>
</feature>
<feature type="glycosylation site" description="O-linked (Xyl...) (glycosaminoglycan) serine" evidence="3">
    <location>
        <position position="43"/>
    </location>
</feature>
<feature type="glycosylation site" description="O-linked (Xyl...) (glycosaminoglycan) serine" evidence="3">
    <location>
        <position position="65"/>
    </location>
</feature>
<feature type="glycosylation site" description="O-linked (Xyl...) (glycosaminoglycan) serine" evidence="3">
    <location>
        <position position="67"/>
    </location>
</feature>
<protein>
    <recommendedName>
        <fullName evidence="2">Syndecan-4</fullName>
        <shortName>SYND4</shortName>
    </recommendedName>
</protein>
<organism>
    <name type="scientific">Sus scrofa</name>
    <name type="common">Pig</name>
    <dbReference type="NCBI Taxonomy" id="9823"/>
    <lineage>
        <taxon>Eukaryota</taxon>
        <taxon>Metazoa</taxon>
        <taxon>Chordata</taxon>
        <taxon>Craniata</taxon>
        <taxon>Vertebrata</taxon>
        <taxon>Euteleostomi</taxon>
        <taxon>Mammalia</taxon>
        <taxon>Eutheria</taxon>
        <taxon>Laurasiatheria</taxon>
        <taxon>Artiodactyla</taxon>
        <taxon>Suina</taxon>
        <taxon>Suidae</taxon>
        <taxon>Sus</taxon>
    </lineage>
</organism>